<reference key="1">
    <citation type="journal article" date="2001" name="Mol. Biol. Evol.">
        <title>Mechanisms for evolving hypervariability: the case of conopeptides.</title>
        <authorList>
            <person name="Conticello S.G."/>
            <person name="Gilad Y."/>
            <person name="Avidan N."/>
            <person name="Ben-Asher E."/>
            <person name="Levy Z."/>
            <person name="Fainzilber M."/>
        </authorList>
    </citation>
    <scope>NUCLEOTIDE SEQUENCE [MRNA]</scope>
</reference>
<reference key="2">
    <citation type="journal article" date="2009" name="Proc. Natl. Acad. Sci. U.S.A.">
        <title>Rapid sensitive analysis of cysteine rich peptide venom components.</title>
        <authorList>
            <person name="Ueberheide B.M."/>
            <person name="Fenyo D."/>
            <person name="Alewood P.F."/>
            <person name="Chait B.T."/>
        </authorList>
    </citation>
    <scope>PROTEIN SEQUENCE OF 53-68</scope>
    <scope>SUBCELLULAR LOCATION</scope>
    <scope>MASS SPECTROMETRY</scope>
    <scope>HYDROXYLATION AT PRO-65</scope>
    <source>
        <tissue>Venom</tissue>
    </source>
</reference>
<reference key="3">
    <citation type="journal article" date="2012" name="Toxicon">
        <title>Secretion and maturation of conotoxins in the venom ducts of Conus textile.</title>
        <authorList>
            <person name="Dobson R."/>
            <person name="Collodoro M."/>
            <person name="Gilles N."/>
            <person name="Turtoi A."/>
            <person name="De Pauw E."/>
            <person name="Quinton L."/>
        </authorList>
    </citation>
    <scope>IDENTIFICATION BY MASS SPECTROMETRY</scope>
    <scope>TISSUE SPECIFICITY</scope>
    <scope>POSITION IN VENOM DUCT</scope>
    <scope>HYDROXYLATION AT PRO-65</scope>
    <source>
        <tissue>Venom</tissue>
    </source>
</reference>
<sequence>MSKLGALLIICLLLFPLTAVPMDGDQPADRPAERMQDDISFEQHPMFDATRRCCNAGFCRFGCTPCCY</sequence>
<protein>
    <recommendedName>
        <fullName evidence="5 9">TxMMSK-03</fullName>
    </recommendedName>
    <alternativeName>
        <fullName evidence="6">Conotoxin 3</fullName>
    </alternativeName>
</protein>
<name>M3_CONTE</name>
<evidence type="ECO:0000250" key="1">
    <source>
        <dbReference type="UniProtKB" id="P0CI24"/>
    </source>
</evidence>
<evidence type="ECO:0000255" key="2"/>
<evidence type="ECO:0000269" key="3">
    <source>
    </source>
</evidence>
<evidence type="ECO:0000269" key="4">
    <source>
    </source>
</evidence>
<evidence type="ECO:0000303" key="5">
    <source>
    </source>
</evidence>
<evidence type="ECO:0000305" key="6"/>
<evidence type="ECO:0000305" key="7">
    <source>
    </source>
</evidence>
<evidence type="ECO:0000305" key="8">
    <source>
    </source>
</evidence>
<evidence type="ECO:0000312" key="9">
    <source>
        <dbReference type="EMBL" id="AAG60354.1"/>
    </source>
</evidence>
<organism>
    <name type="scientific">Conus textile</name>
    <name type="common">Cloth-of-gold cone</name>
    <dbReference type="NCBI Taxonomy" id="6494"/>
    <lineage>
        <taxon>Eukaryota</taxon>
        <taxon>Metazoa</taxon>
        <taxon>Spiralia</taxon>
        <taxon>Lophotrochozoa</taxon>
        <taxon>Mollusca</taxon>
        <taxon>Gastropoda</taxon>
        <taxon>Caenogastropoda</taxon>
        <taxon>Neogastropoda</taxon>
        <taxon>Conoidea</taxon>
        <taxon>Conidae</taxon>
        <taxon>Conus</taxon>
        <taxon>Cylinder</taxon>
    </lineage>
</organism>
<proteinExistence type="evidence at protein level"/>
<dbReference type="EMBL" id="AF214926">
    <property type="protein sequence ID" value="AAG60354.1"/>
    <property type="molecule type" value="mRNA"/>
</dbReference>
<dbReference type="ConoServer" id="613">
    <property type="toxin name" value="TxMMSK-03 precursor"/>
</dbReference>
<dbReference type="GO" id="GO:0005576">
    <property type="term" value="C:extracellular region"/>
    <property type="evidence" value="ECO:0007669"/>
    <property type="project" value="UniProtKB-SubCell"/>
</dbReference>
<dbReference type="GO" id="GO:0008200">
    <property type="term" value="F:ion channel inhibitor activity"/>
    <property type="evidence" value="ECO:0007669"/>
    <property type="project" value="InterPro"/>
</dbReference>
<dbReference type="GO" id="GO:0090729">
    <property type="term" value="F:toxin activity"/>
    <property type="evidence" value="ECO:0007669"/>
    <property type="project" value="UniProtKB-KW"/>
</dbReference>
<dbReference type="InterPro" id="IPR004214">
    <property type="entry name" value="Conotoxin"/>
</dbReference>
<dbReference type="Pfam" id="PF02950">
    <property type="entry name" value="Conotoxin"/>
    <property type="match status" value="1"/>
</dbReference>
<keyword id="KW-0165">Cleavage on pair of basic residues</keyword>
<keyword id="KW-0903">Direct protein sequencing</keyword>
<keyword id="KW-1015">Disulfide bond</keyword>
<keyword id="KW-0379">Hydroxylation</keyword>
<keyword id="KW-0964">Secreted</keyword>
<keyword id="KW-0732">Signal</keyword>
<keyword id="KW-0800">Toxin</keyword>
<comment type="subcellular location">
    <subcellularLocation>
        <location evidence="3">Secreted</location>
    </subcellularLocation>
</comment>
<comment type="tissue specificity">
    <text evidence="7 8">Expressed by the venom duct. Both hydroxylated and non-hydroxylated forms are mostly and only present in part 2 (proximal of the venom bulb) of the venom duct, respectively.</text>
</comment>
<comment type="domain">
    <text evidence="6">The cysteine framework is III (CC-C-C-CC). Classified in the M-2 branch, since 2 residues stand between the fourth and the fifth cysteine residues.</text>
</comment>
<comment type="PTM">
    <text evidence="3">Contains 3 disulfide bonds.</text>
</comment>
<comment type="mass spectrometry"/>
<comment type="similarity">
    <text evidence="6">Belongs to the conotoxin M superfamily.</text>
</comment>
<accession>Q9BPJ7</accession>
<feature type="signal peptide" evidence="2">
    <location>
        <begin position="1"/>
        <end position="19"/>
    </location>
</feature>
<feature type="propeptide" id="PRO_0000371275" evidence="4">
    <location>
        <begin position="20"/>
        <end position="50"/>
    </location>
</feature>
<feature type="peptide" id="PRO_0000371276" description="TxMMSK-03" evidence="4">
    <location>
        <begin position="53"/>
        <end position="68"/>
    </location>
</feature>
<feature type="modified residue" description="4-hydroxyproline; partial" evidence="3 4">
    <location>
        <position position="65"/>
    </location>
</feature>
<feature type="disulfide bond" evidence="1">
    <location>
        <begin position="53"/>
        <end position="67"/>
    </location>
</feature>
<feature type="disulfide bond" evidence="1">
    <location>
        <begin position="54"/>
        <end position="63"/>
    </location>
</feature>
<feature type="disulfide bond" evidence="1">
    <location>
        <begin position="59"/>
        <end position="66"/>
    </location>
</feature>